<proteinExistence type="evidence at protein level"/>
<feature type="chain" id="PRO_0000143191" description="Protein DOM34">
    <location>
        <begin position="1"/>
        <end position="386"/>
    </location>
</feature>
<feature type="mutagenesis site" description="Does not affect the No-Go Decay (NGD) pathway." evidence="7">
    <original>E</original>
    <variation>A</variation>
    <location>
        <position position="23"/>
    </location>
</feature>
<feature type="mutagenesis site" description="Does not affect the No-Go Decay (NGD) pathway." evidence="7">
    <original>E</original>
    <variation>A</variation>
    <location>
        <position position="26"/>
    </location>
</feature>
<feature type="mutagenesis site" description="Reduced No-Go Decay (NGD) pathway." evidence="7">
    <original>D</original>
    <variation>A</variation>
    <location>
        <position position="27"/>
    </location>
</feature>
<feature type="mutagenesis site" description="Reduced ability to trigger the No-Go Decay (NGD) pathway, reduced ability to promote degradation of non-functional rRNAs." evidence="9">
    <original>KKKR</original>
    <variation>AAAA</variation>
    <location>
        <begin position="174"/>
        <end position="177"/>
    </location>
</feature>
<feature type="mutagenesis site" description="Reduced No-Go Decay (NGD) pathway." evidence="7">
    <original>KKK</original>
    <variation>AAA</variation>
    <location>
        <begin position="174"/>
        <end position="176"/>
    </location>
</feature>
<feature type="mutagenesis site" description="Reduced No-Go Decay (NGD) pathway." evidence="7">
    <original>PGF</original>
    <variation>AAA</variation>
    <location>
        <begin position="216"/>
        <end position="218"/>
    </location>
</feature>
<feature type="mutagenesis site" description="Reduced No-Go Decay (NGD) pathway." evidence="7">
    <original>P</original>
    <variation>A</variation>
    <location>
        <position position="216"/>
    </location>
</feature>
<feature type="mutagenesis site" description="Reduced ability to trigger the No-Go Decay (NGD) pathway, reduced ability to promote degradation of non-functional rRNAs; when associated with A-361." evidence="9">
    <original>Y</original>
    <variation>A</variation>
    <location>
        <position position="300"/>
    </location>
</feature>
<feature type="mutagenesis site" description="Reduced ability to trigger the No-Go Decay (NGD) pathway, reduced ability to promote degradation of non-functional rRNAs." evidence="9">
    <original>ELDQ</original>
    <variation>RLDA</variation>
    <location>
        <begin position="361"/>
        <end position="364"/>
    </location>
</feature>
<feature type="mutagenesis site" description="Reduced ability to trigger the No-Go Decay (NGD) pathway, reduced ability to promote degradation of non-functional rRNAs; when associated with A-300." evidence="9">
    <original>E</original>
    <variation>A</variation>
    <location>
        <position position="361"/>
    </location>
</feature>
<feature type="mutagenesis site" description="Reduced ability to trigger the No-Go Decay (NGD) pathway, reduced ability to promote degradation of non-functional rRNAs." evidence="9">
    <original>E</original>
    <variation>R</variation>
    <location>
        <position position="361"/>
    </location>
</feature>
<feature type="strand" evidence="18">
    <location>
        <begin position="2"/>
        <end position="8"/>
    </location>
</feature>
<feature type="strand" evidence="18">
    <location>
        <begin position="16"/>
        <end position="21"/>
    </location>
</feature>
<feature type="helix" evidence="18">
    <location>
        <begin position="25"/>
        <end position="32"/>
    </location>
</feature>
<feature type="strand" evidence="18">
    <location>
        <begin position="40"/>
        <end position="45"/>
    </location>
</feature>
<feature type="strand" evidence="18">
    <location>
        <begin position="63"/>
        <end position="75"/>
    </location>
</feature>
<feature type="turn" evidence="18">
    <location>
        <begin position="76"/>
        <end position="79"/>
    </location>
</feature>
<feature type="strand" evidence="18">
    <location>
        <begin position="80"/>
        <end position="87"/>
    </location>
</feature>
<feature type="strand" evidence="18">
    <location>
        <begin position="93"/>
        <end position="96"/>
    </location>
</feature>
<feature type="strand" evidence="18">
    <location>
        <begin position="104"/>
        <end position="108"/>
    </location>
</feature>
<feature type="strand" evidence="18">
    <location>
        <begin position="111"/>
        <end position="113"/>
    </location>
</feature>
<feature type="strand" evidence="18">
    <location>
        <begin position="115"/>
        <end position="120"/>
    </location>
</feature>
<feature type="helix" evidence="18">
    <location>
        <begin position="124"/>
        <end position="132"/>
    </location>
</feature>
<feature type="turn" evidence="18">
    <location>
        <begin position="136"/>
        <end position="140"/>
    </location>
</feature>
<feature type="strand" evidence="18">
    <location>
        <begin position="142"/>
        <end position="148"/>
    </location>
</feature>
<feature type="strand" evidence="18">
    <location>
        <begin position="151"/>
        <end position="157"/>
    </location>
</feature>
<feature type="strand" evidence="18">
    <location>
        <begin position="162"/>
        <end position="169"/>
    </location>
</feature>
<feature type="helix" evidence="18">
    <location>
        <begin position="186"/>
        <end position="202"/>
    </location>
</feature>
<feature type="turn" evidence="18">
    <location>
        <begin position="205"/>
        <end position="207"/>
    </location>
</feature>
<feature type="strand" evidence="18">
    <location>
        <begin position="209"/>
        <end position="216"/>
    </location>
</feature>
<feature type="helix" evidence="18">
    <location>
        <begin position="219"/>
        <end position="233"/>
    </location>
</feature>
<feature type="helix" evidence="18">
    <location>
        <begin position="237"/>
        <end position="240"/>
    </location>
</feature>
<feature type="helix" evidence="18">
    <location>
        <begin position="241"/>
        <end position="245"/>
    </location>
</feature>
<feature type="strand" evidence="18">
    <location>
        <begin position="246"/>
        <end position="250"/>
    </location>
</feature>
<feature type="turn" evidence="17">
    <location>
        <begin position="254"/>
        <end position="256"/>
    </location>
</feature>
<feature type="helix" evidence="18">
    <location>
        <begin position="257"/>
        <end position="264"/>
    </location>
</feature>
<feature type="helix" evidence="18">
    <location>
        <begin position="266"/>
        <end position="268"/>
    </location>
</feature>
<feature type="helix" evidence="18">
    <location>
        <begin position="269"/>
        <end position="276"/>
    </location>
</feature>
<feature type="helix" evidence="18">
    <location>
        <begin position="278"/>
        <end position="291"/>
    </location>
</feature>
<feature type="turn" evidence="18">
    <location>
        <begin position="292"/>
        <end position="294"/>
    </location>
</feature>
<feature type="strand" evidence="18">
    <location>
        <begin position="296"/>
        <end position="301"/>
    </location>
</feature>
<feature type="helix" evidence="18">
    <location>
        <begin position="302"/>
        <end position="310"/>
    </location>
</feature>
<feature type="strand" evidence="18">
    <location>
        <begin position="314"/>
        <end position="320"/>
    </location>
</feature>
<feature type="helix" evidence="18">
    <location>
        <begin position="323"/>
        <end position="325"/>
    </location>
</feature>
<feature type="helix" evidence="18">
    <location>
        <begin position="329"/>
        <end position="344"/>
    </location>
</feature>
<feature type="strand" evidence="18">
    <location>
        <begin position="348"/>
        <end position="352"/>
    </location>
</feature>
<feature type="helix" evidence="18">
    <location>
        <begin position="357"/>
        <end position="364"/>
    </location>
</feature>
<feature type="turn" evidence="18">
    <location>
        <begin position="365"/>
        <end position="367"/>
    </location>
</feature>
<feature type="strand" evidence="18">
    <location>
        <begin position="368"/>
        <end position="374"/>
    </location>
</feature>
<protein>
    <recommendedName>
        <fullName>Protein DOM34</fullName>
    </recommendedName>
</protein>
<evidence type="ECO:0000269" key="1">
    <source>
    </source>
</evidence>
<evidence type="ECO:0000269" key="2">
    <source>
    </source>
</evidence>
<evidence type="ECO:0000269" key="3">
    <source>
    </source>
</evidence>
<evidence type="ECO:0000269" key="4">
    <source>
    </source>
</evidence>
<evidence type="ECO:0000269" key="5">
    <source>
    </source>
</evidence>
<evidence type="ECO:0000269" key="6">
    <source>
    </source>
</evidence>
<evidence type="ECO:0000269" key="7">
    <source>
    </source>
</evidence>
<evidence type="ECO:0000269" key="8">
    <source>
    </source>
</evidence>
<evidence type="ECO:0000269" key="9">
    <source>
    </source>
</evidence>
<evidence type="ECO:0000269" key="10">
    <source>
    </source>
</evidence>
<evidence type="ECO:0000269" key="11">
    <source>
    </source>
</evidence>
<evidence type="ECO:0000303" key="12">
    <source>
    </source>
</evidence>
<evidence type="ECO:0000305" key="13"/>
<evidence type="ECO:0000312" key="14">
    <source>
        <dbReference type="SGD" id="S000004946"/>
    </source>
</evidence>
<evidence type="ECO:0007744" key="15">
    <source>
        <dbReference type="PDB" id="3IZQ"/>
    </source>
</evidence>
<evidence type="ECO:0007744" key="16">
    <source>
        <dbReference type="PDB" id="5M1J"/>
    </source>
</evidence>
<evidence type="ECO:0007829" key="17">
    <source>
        <dbReference type="PDB" id="2VGM"/>
    </source>
</evidence>
<evidence type="ECO:0007829" key="18">
    <source>
        <dbReference type="PDB" id="2VGN"/>
    </source>
</evidence>
<organism>
    <name type="scientific">Saccharomyces cerevisiae (strain ATCC 204508 / S288c)</name>
    <name type="common">Baker's yeast</name>
    <dbReference type="NCBI Taxonomy" id="559292"/>
    <lineage>
        <taxon>Eukaryota</taxon>
        <taxon>Fungi</taxon>
        <taxon>Dikarya</taxon>
        <taxon>Ascomycota</taxon>
        <taxon>Saccharomycotina</taxon>
        <taxon>Saccharomycetes</taxon>
        <taxon>Saccharomycetales</taxon>
        <taxon>Saccharomycetaceae</taxon>
        <taxon>Saccharomyces</taxon>
    </lineage>
</organism>
<comment type="function">
    <text evidence="4 5 6 7 8 9">Component of the Dom34-Hbs1 complex, a complex that recognizes stalled ribosomes and triggers the No-Go Decay (NGD) pathway (PubMed:16554824, PubMed:17889667, PubMed:18180287, PubMed:19420139, PubMed:20947765, PubMed:21102444). In the Dom34-Hbs1 complex, DOM34 recognizes ribosomes stalled at the 3' end of an mRNA and engages stalled ribosomes by destabilizing mRNA in the mRNA channel (PubMed:16554824, PubMed:20947765). Following ribosome-binding, the Dom34-Hbs1 complex promotes the disassembly of stalled ribosomes, followed by degradation of damaged mRNAs as part of the NGD pathway (PubMed:20947765). The Dom34-Hbs1 complex is also involved in non-functional rRNA decay (PubMed:21102444).</text>
</comment>
<comment type="cofactor">
    <cofactor evidence="5">
        <name>a divalent metal cation</name>
        <dbReference type="ChEBI" id="CHEBI:60240"/>
    </cofactor>
</comment>
<comment type="subunit">
    <text evidence="1 5 6 8 9 10 11">Monomer (PubMed:18180287). Component of the Dom34-Hbs1 complex, also named Pelota-HBS1L complex, composed of DOM34 and HBS1 (PubMed:11909951, PubMed:17889667, PubMed:18180287, PubMed:20947765, PubMed:21102444, PubMed:21623367, PubMed:27995908).</text>
</comment>
<comment type="interaction">
    <interactant intactId="EBI-6012">
        <id>P33309</id>
    </interactant>
    <interactant intactId="EBI-8194">
        <id>P32769</id>
        <label>HBS1</label>
    </interactant>
    <organismsDiffer>false</organismsDiffer>
    <experiments>8</experiments>
</comment>
<comment type="subcellular location">
    <subcellularLocation>
        <location evidence="2">Cytoplasm</location>
    </subcellularLocation>
</comment>
<comment type="miscellaneous">
    <text evidence="3">Present with 1720 molecules/cell in log phase SD medium.</text>
</comment>
<comment type="similarity">
    <text evidence="13">Belongs to the eukaryotic release factor 1 family. Pelota subfamily.</text>
</comment>
<comment type="caution">
    <text evidence="4 5 7">The Dom34-Hbs1 complex was initially thought to mediate endonucleolytic cleavage of the mRNA to release non-functional ribosomes and degrade damaged mRNAs. DOM34 was reported to have endoribonuclease activity (PubMed:16554824, PubMed:17889667). However, it was later shown that it is not the case (PubMed:19420139).</text>
</comment>
<comment type="sequence caution" evidence="13">
    <conflict type="erroneous initiation">
        <sequence resource="EMBL-CDS" id="AAA34575"/>
    </conflict>
</comment>
<gene>
    <name evidence="12 14" type="primary">DOM34</name>
    <name type="ordered locus">YNL001W</name>
    <name type="ORF">N2016</name>
</gene>
<keyword id="KW-0002">3D-structure</keyword>
<keyword id="KW-0131">Cell cycle</keyword>
<keyword id="KW-0132">Cell division</keyword>
<keyword id="KW-0963">Cytoplasm</keyword>
<keyword id="KW-0469">Meiosis</keyword>
<keyword id="KW-0479">Metal-binding</keyword>
<keyword id="KW-0498">Mitosis</keyword>
<keyword id="KW-0648">Protein biosynthesis</keyword>
<keyword id="KW-1185">Reference proteome</keyword>
<keyword id="KW-0810">Translation regulation</keyword>
<reference key="1">
    <citation type="journal article" date="1993" name="C. R. Acad. Sci. III, Sci. Vie">
        <title>Two yeast chromosomes are related by a fossil duplication of their centromeric regions.</title>
        <authorList>
            <person name="Lalo D."/>
            <person name="Stettler S."/>
            <person name="Mariotte S."/>
            <person name="Slonimski P.P."/>
            <person name="Thuriaux P."/>
        </authorList>
    </citation>
    <scope>NUCLEOTIDE SEQUENCE [GENOMIC DNA]</scope>
    <source>
        <strain>S288c / GRF88</strain>
    </source>
</reference>
<reference key="2">
    <citation type="journal article" date="1994" name="Yeast">
        <title>Organization of the centromeric region of chromosome XIV in Saccharomyces cerevisiae.</title>
        <authorList>
            <person name="Lalo D."/>
            <person name="Stettler S."/>
            <person name="Mariotte S."/>
            <person name="Gendreau E."/>
            <person name="Thuriaux P."/>
        </authorList>
    </citation>
    <scope>NUCLEOTIDE SEQUENCE [GENOMIC DNA]</scope>
    <source>
        <strain>S288c / GRF88</strain>
    </source>
</reference>
<reference key="3">
    <citation type="journal article" date="1994" name="Yeast">
        <title>Nucleotide sequence analysis of an 8887 bp region of the left arm of yeast chromosome XIV, encompassing the centromere sequence.</title>
        <authorList>
            <person name="Verhasselt P."/>
            <person name="Aert R."/>
            <person name="Voet M."/>
            <person name="Volckaert G."/>
        </authorList>
    </citation>
    <scope>NUCLEOTIDE SEQUENCE [GENOMIC DNA]</scope>
    <source>
        <strain>ATCC 96604 / S288c / FY1679</strain>
    </source>
</reference>
<reference key="4">
    <citation type="journal article" date="1997" name="Nature">
        <title>The nucleotide sequence of Saccharomyces cerevisiae chromosome XIV and its evolutionary implications.</title>
        <authorList>
            <person name="Philippsen P."/>
            <person name="Kleine K."/>
            <person name="Poehlmann R."/>
            <person name="Duesterhoeft A."/>
            <person name="Hamberg K."/>
            <person name="Hegemann J.H."/>
            <person name="Obermaier B."/>
            <person name="Urrestarazu L.A."/>
            <person name="Aert R."/>
            <person name="Albermann K."/>
            <person name="Altmann R."/>
            <person name="Andre B."/>
            <person name="Baladron V."/>
            <person name="Ballesta J.P.G."/>
            <person name="Becam A.-M."/>
            <person name="Beinhauer J.D."/>
            <person name="Boskovic J."/>
            <person name="Buitrago M.J."/>
            <person name="Bussereau F."/>
            <person name="Coster F."/>
            <person name="Crouzet M."/>
            <person name="D'Angelo M."/>
            <person name="Dal Pero F."/>
            <person name="De Antoni A."/>
            <person name="del Rey F."/>
            <person name="Doignon F."/>
            <person name="Domdey H."/>
            <person name="Dubois E."/>
            <person name="Fiedler T.A."/>
            <person name="Fleig U."/>
            <person name="Floeth M."/>
            <person name="Fritz C."/>
            <person name="Gaillardin C."/>
            <person name="Garcia-Cantalejo J.M."/>
            <person name="Glansdorff N."/>
            <person name="Goffeau A."/>
            <person name="Gueldener U."/>
            <person name="Herbert C.J."/>
            <person name="Heumann K."/>
            <person name="Heuss-Neitzel D."/>
            <person name="Hilbert H."/>
            <person name="Hinni K."/>
            <person name="Iraqui Houssaini I."/>
            <person name="Jacquet M."/>
            <person name="Jimenez A."/>
            <person name="Jonniaux J.-L."/>
            <person name="Karpfinger-Hartl L."/>
            <person name="Lanfranchi G."/>
            <person name="Lepingle A."/>
            <person name="Levesque H."/>
            <person name="Lyck R."/>
            <person name="Maftahi M."/>
            <person name="Mallet L."/>
            <person name="Maurer C.T.C."/>
            <person name="Messenguy F."/>
            <person name="Mewes H.-W."/>
            <person name="Moestl D."/>
            <person name="Nasr F."/>
            <person name="Nicaud J.-M."/>
            <person name="Niedenthal R.K."/>
            <person name="Pandolfo D."/>
            <person name="Pierard A."/>
            <person name="Piravandi E."/>
            <person name="Planta R.J."/>
            <person name="Pohl T.M."/>
            <person name="Purnelle B."/>
            <person name="Rebischung C."/>
            <person name="Remacha M.A."/>
            <person name="Revuelta J.L."/>
            <person name="Rinke M."/>
            <person name="Saiz J.E."/>
            <person name="Sartorello F."/>
            <person name="Scherens B."/>
            <person name="Sen-Gupta M."/>
            <person name="Soler-Mira A."/>
            <person name="Urbanus J.H.M."/>
            <person name="Valle G."/>
            <person name="Van Dyck L."/>
            <person name="Verhasselt P."/>
            <person name="Vierendeels F."/>
            <person name="Vissers S."/>
            <person name="Voet M."/>
            <person name="Volckaert G."/>
            <person name="Wach A."/>
            <person name="Wambutt R."/>
            <person name="Wedler H."/>
            <person name="Zollner A."/>
            <person name="Hani J."/>
        </authorList>
    </citation>
    <scope>NUCLEOTIDE SEQUENCE [LARGE SCALE GENOMIC DNA]</scope>
    <source>
        <strain>ATCC 204508 / S288c</strain>
    </source>
</reference>
<reference key="5">
    <citation type="journal article" date="2014" name="G3 (Bethesda)">
        <title>The reference genome sequence of Saccharomyces cerevisiae: Then and now.</title>
        <authorList>
            <person name="Engel S.R."/>
            <person name="Dietrich F.S."/>
            <person name="Fisk D.G."/>
            <person name="Binkley G."/>
            <person name="Balakrishnan R."/>
            <person name="Costanzo M.C."/>
            <person name="Dwight S.S."/>
            <person name="Hitz B.C."/>
            <person name="Karra K."/>
            <person name="Nash R.S."/>
            <person name="Weng S."/>
            <person name="Wong E.D."/>
            <person name="Lloyd P."/>
            <person name="Skrzypek M.S."/>
            <person name="Miyasato S.R."/>
            <person name="Simison M."/>
            <person name="Cherry J.M."/>
        </authorList>
    </citation>
    <scope>GENOME REANNOTATION</scope>
    <source>
        <strain>ATCC 204508 / S288c</strain>
    </source>
</reference>
<reference key="6">
    <citation type="journal article" date="2002" name="Mol. Cell. Biol.">
        <title>Novel G-protein complex whose requirement is linked to the translational status of the cell.</title>
        <authorList>
            <person name="Carr-Schmid A."/>
            <person name="Pfund C."/>
            <person name="Craig E.A."/>
            <person name="Kinzy T.G."/>
        </authorList>
    </citation>
    <scope>INTERACTION WITH HBS1</scope>
</reference>
<reference key="7">
    <citation type="journal article" date="2003" name="Nature">
        <title>Global analysis of protein localization in budding yeast.</title>
        <authorList>
            <person name="Huh W.-K."/>
            <person name="Falvo J.V."/>
            <person name="Gerke L.C."/>
            <person name="Carroll A.S."/>
            <person name="Howson R.W."/>
            <person name="Weissman J.S."/>
            <person name="O'Shea E.K."/>
        </authorList>
    </citation>
    <scope>SUBCELLULAR LOCATION [LARGE SCALE ANALYSIS]</scope>
</reference>
<reference key="8">
    <citation type="journal article" date="2003" name="Nature">
        <title>Global analysis of protein expression in yeast.</title>
        <authorList>
            <person name="Ghaemmaghami S."/>
            <person name="Huh W.-K."/>
            <person name="Bower K."/>
            <person name="Howson R.W."/>
            <person name="Belle A."/>
            <person name="Dephoure N."/>
            <person name="O'Shea E.K."/>
            <person name="Weissman J.S."/>
        </authorList>
    </citation>
    <scope>LEVEL OF PROTEIN EXPRESSION [LARGE SCALE ANALYSIS]</scope>
</reference>
<reference key="9">
    <citation type="journal article" date="2006" name="Nature">
        <title>Endonucleolytic cleavage of eukaryotic mRNAs with stalls in translation elongation.</title>
        <authorList>
            <person name="Doma M.K."/>
            <person name="Parker R."/>
        </authorList>
    </citation>
    <scope>FUNCTION</scope>
</reference>
<reference key="10">
    <citation type="journal article" date="2007" name="Mol. Cell">
        <title>Structural and functional insights into Dom34, a key component of no-go mRNA decay.</title>
        <authorList>
            <person name="Lee H.H."/>
            <person name="Kim Y.-S."/>
            <person name="Kim K.H."/>
            <person name="Heo I."/>
            <person name="Kim S.K."/>
            <person name="Kim O."/>
            <person name="Kim H.K."/>
            <person name="Yoon J.Y."/>
            <person name="Kim H.S."/>
            <person name="Kim do J."/>
            <person name="Lee S.J."/>
            <person name="Yoon H.J."/>
            <person name="Kim S.J."/>
            <person name="Lee B.G."/>
            <person name="Song H.K."/>
            <person name="Kim V.N."/>
            <person name="Park C.-M."/>
            <person name="Suh S.W."/>
        </authorList>
    </citation>
    <scope>FUNCTION</scope>
    <scope>CATALYTIC ACTIVITY</scope>
    <scope>COFACTOR</scope>
    <scope>INTERACTION WITH HBS1</scope>
</reference>
<reference key="11">
    <citation type="journal article" date="2008" name="J. Biol. Chem.">
        <title>Structure of yeast Dom34: a protein related to translation termination factor Erf1 and involved in No-Go decay.</title>
        <authorList>
            <person name="Graille M."/>
            <person name="Chaillet M."/>
            <person name="van Tilbeurgh H."/>
        </authorList>
    </citation>
    <scope>X-RAY CRYSTALLOGRAPHY (2.5 ANGSTROMS)</scope>
    <scope>FUNCTION</scope>
    <scope>SUBUNIT</scope>
    <scope>INTERACTION WITH HBS1</scope>
    <scope>DOMAIN</scope>
</reference>
<reference key="12">
    <citation type="journal article" date="2009" name="Mol. Biol. Cell">
        <title>Analysis of Dom34 and its function in no-go decay.</title>
        <authorList>
            <person name="Passos D.O."/>
            <person name="Doma M.K."/>
            <person name="Shoemaker C.J."/>
            <person name="Muhlrad D."/>
            <person name="Green R."/>
            <person name="Weissman J."/>
            <person name="Hollien J."/>
            <person name="Parker R."/>
        </authorList>
    </citation>
    <scope>FUNCTION</scope>
    <scope>MUTAGENESIS OF GLU-23; GLU-26; ASP-27; 174-LYS--LYS-176; 216-PRO--PHE-218 AND PRO-216</scope>
</reference>
<reference key="13">
    <citation type="journal article" date="2010" name="Science">
        <title>Dom34:Hbs1 promotes subunit dissociation and peptidyl-tRNA drop-off to initiate no-go decay.</title>
        <authorList>
            <person name="Shoemaker C.J."/>
            <person name="Eyler D.E."/>
            <person name="Green R."/>
        </authorList>
    </citation>
    <scope>FUNCTION</scope>
    <scope>IDENTIFICATION IN THE DOM34-HBS1 COMPLEX</scope>
</reference>
<reference key="14">
    <citation type="journal article" date="2010" name="Nat. Struct. Mol. Biol.">
        <title>Dissection of Dom34-Hbs1 reveals independent functions in two RNA quality control pathways.</title>
        <authorList>
            <person name="van den Elzen A.M."/>
            <person name="Henri J."/>
            <person name="Lazar N."/>
            <person name="Gas M.E."/>
            <person name="Durand D."/>
            <person name="Lacroute F."/>
            <person name="Nicaise M."/>
            <person name="van Tilbeurgh H."/>
            <person name="Seraphin B."/>
            <person name="Graille M."/>
        </authorList>
    </citation>
    <scope>FUNCTION</scope>
    <scope>IDENTIFICATION IN THE DOM34-HBS1 COMPLEX</scope>
    <scope>MUTAGENESIS OF 174-LYS--ARG-177; TYR-300; 361-GLU--GLN-364 AND GLU-361</scope>
</reference>
<reference evidence="15" key="15">
    <citation type="journal article" date="2011" name="Nat. Struct. Mol. Biol.">
        <title>Structure of the no-go mRNA decay complex Dom34-Hbs1 bound to a stalled 80S ribosome.</title>
        <authorList>
            <person name="Becker T."/>
            <person name="Armache J.P."/>
            <person name="Jarasch A."/>
            <person name="Anger A.M."/>
            <person name="Villa E."/>
            <person name="Sieber H."/>
            <person name="Motaal B.A."/>
            <person name="Mielke T."/>
            <person name="Berninghausen O."/>
            <person name="Beckmann R."/>
        </authorList>
    </citation>
    <scope>STRUCTURE BY ELECTRON MICROSCOPY (9.50 ANGSTROMS) IN COMPLEX WITH HBS1</scope>
    <scope>IDENTIFICATION IN THE DOM34-HBS1 COMPLEX</scope>
</reference>
<reference evidence="16" key="16">
    <citation type="journal article" date="2016" name="Nat. Commun.">
        <title>Structural insights into ribosomal rescue by Dom34 and Hbs1 at near-atomic resolution.</title>
        <authorList>
            <person name="Hilal T."/>
            <person name="Yamamoto H."/>
            <person name="Loerke J."/>
            <person name="Buerger J."/>
            <person name="Mielke T."/>
            <person name="Spahn C.M."/>
        </authorList>
    </citation>
    <scope>STRUCTURE BY ELECTRON MICROSCOPY (3.30 ANGSTROMS) OF 1-381 IN COMPLEX WITH HBS1 AND RIBOSOME</scope>
    <scope>IDENTIFICATION IN THE DOM34-HBS1 COMPLEX</scope>
</reference>
<dbReference type="EMBL" id="L11277">
    <property type="protein sequence ID" value="AAA34575.1"/>
    <property type="status" value="ALT_INIT"/>
    <property type="molecule type" value="Genomic_DNA"/>
</dbReference>
<dbReference type="EMBL" id="X77114">
    <property type="protein sequence ID" value="CAA54375.1"/>
    <property type="molecule type" value="Genomic_DNA"/>
</dbReference>
<dbReference type="EMBL" id="Z71277">
    <property type="protein sequence ID" value="CAA95860.1"/>
    <property type="molecule type" value="Genomic_DNA"/>
</dbReference>
<dbReference type="EMBL" id="BK006947">
    <property type="protein sequence ID" value="DAA10542.1"/>
    <property type="molecule type" value="Genomic_DNA"/>
</dbReference>
<dbReference type="PIR" id="S45456">
    <property type="entry name" value="S45456"/>
</dbReference>
<dbReference type="RefSeq" id="NP_014397.1">
    <property type="nucleotide sequence ID" value="NM_001182840.1"/>
</dbReference>
<dbReference type="PDB" id="2VGM">
    <property type="method" value="X-ray"/>
    <property type="resolution" value="2.60 A"/>
    <property type="chains" value="A=1-386"/>
</dbReference>
<dbReference type="PDB" id="2VGN">
    <property type="method" value="X-ray"/>
    <property type="resolution" value="2.50 A"/>
    <property type="chains" value="A/B=1-386"/>
</dbReference>
<dbReference type="PDB" id="3IZQ">
    <property type="method" value="EM"/>
    <property type="chains" value="0=1-386"/>
</dbReference>
<dbReference type="PDB" id="3J16">
    <property type="method" value="EM"/>
    <property type="chains" value="A=1-386"/>
</dbReference>
<dbReference type="PDB" id="5M1J">
    <property type="method" value="EM"/>
    <property type="resolution" value="3.30 A"/>
    <property type="chains" value="A1=1-381"/>
</dbReference>
<dbReference type="PDBsum" id="2VGM"/>
<dbReference type="PDBsum" id="2VGN"/>
<dbReference type="PDBsum" id="3IZQ"/>
<dbReference type="PDBsum" id="3J16"/>
<dbReference type="PDBsum" id="5M1J"/>
<dbReference type="EMDB" id="EMD-4140"/>
<dbReference type="SMR" id="P33309"/>
<dbReference type="BioGRID" id="35824">
    <property type="interactions" value="304"/>
</dbReference>
<dbReference type="ComplexPortal" id="CPX-465">
    <property type="entry name" value="DOM34-HBS1 ribosome dissociation complex"/>
</dbReference>
<dbReference type="DIP" id="DIP-7520N"/>
<dbReference type="FunCoup" id="P33309">
    <property type="interactions" value="620"/>
</dbReference>
<dbReference type="IntAct" id="P33309">
    <property type="interactions" value="22"/>
</dbReference>
<dbReference type="MINT" id="P33309"/>
<dbReference type="STRING" id="4932.YNL001W"/>
<dbReference type="iPTMnet" id="P33309"/>
<dbReference type="PaxDb" id="4932-YNL001W"/>
<dbReference type="PeptideAtlas" id="P33309"/>
<dbReference type="EnsemblFungi" id="YNL001W_mRNA">
    <property type="protein sequence ID" value="YNL001W"/>
    <property type="gene ID" value="YNL001W"/>
</dbReference>
<dbReference type="GeneID" id="855731"/>
<dbReference type="KEGG" id="sce:YNL001W"/>
<dbReference type="AGR" id="SGD:S000004946"/>
<dbReference type="SGD" id="S000004946">
    <property type="gene designation" value="DOM34"/>
</dbReference>
<dbReference type="VEuPathDB" id="FungiDB:YNL001W"/>
<dbReference type="eggNOG" id="KOG2869">
    <property type="taxonomic scope" value="Eukaryota"/>
</dbReference>
<dbReference type="GeneTree" id="ENSGT00390000016326"/>
<dbReference type="HOGENOM" id="CLU_023334_3_1_1"/>
<dbReference type="InParanoid" id="P33309"/>
<dbReference type="OMA" id="LKMIILC"/>
<dbReference type="OrthoDB" id="10249111at2759"/>
<dbReference type="BioCyc" id="YEAST:G3O-33043-MONOMER"/>
<dbReference type="BioGRID-ORCS" id="855731">
    <property type="hits" value="0 hits in 10 CRISPR screens"/>
</dbReference>
<dbReference type="CD-CODE" id="E03F929F">
    <property type="entry name" value="Stress granule"/>
</dbReference>
<dbReference type="EvolutionaryTrace" id="P33309"/>
<dbReference type="PRO" id="PR:P33309"/>
<dbReference type="Proteomes" id="UP000002311">
    <property type="component" value="Chromosome XIV"/>
</dbReference>
<dbReference type="RNAct" id="P33309">
    <property type="molecule type" value="protein"/>
</dbReference>
<dbReference type="GO" id="GO:0005737">
    <property type="term" value="C:cytoplasm"/>
    <property type="evidence" value="ECO:0007005"/>
    <property type="project" value="SGD"/>
</dbReference>
<dbReference type="GO" id="GO:1990533">
    <property type="term" value="C:Dom34-Hbs1 complex"/>
    <property type="evidence" value="ECO:0000314"/>
    <property type="project" value="UniProtKB"/>
</dbReference>
<dbReference type="GO" id="GO:0046872">
    <property type="term" value="F:metal ion binding"/>
    <property type="evidence" value="ECO:0007669"/>
    <property type="project" value="UniProtKB-KW"/>
</dbReference>
<dbReference type="GO" id="GO:0004521">
    <property type="term" value="F:RNA endonuclease activity"/>
    <property type="evidence" value="ECO:0000314"/>
    <property type="project" value="SGD"/>
</dbReference>
<dbReference type="GO" id="GO:0051301">
    <property type="term" value="P:cell division"/>
    <property type="evidence" value="ECO:0007669"/>
    <property type="project" value="UniProtKB-KW"/>
</dbReference>
<dbReference type="GO" id="GO:0051321">
    <property type="term" value="P:meiotic cell cycle"/>
    <property type="evidence" value="ECO:0007669"/>
    <property type="project" value="UniProtKB-KW"/>
</dbReference>
<dbReference type="GO" id="GO:0070651">
    <property type="term" value="P:nonfunctional rRNA decay"/>
    <property type="evidence" value="ECO:0000314"/>
    <property type="project" value="UniProtKB"/>
</dbReference>
<dbReference type="GO" id="GO:0070966">
    <property type="term" value="P:nuclear-transcribed mRNA catabolic process, no-go decay"/>
    <property type="evidence" value="ECO:0000314"/>
    <property type="project" value="UniProtKB"/>
</dbReference>
<dbReference type="GO" id="GO:0070481">
    <property type="term" value="P:nuclear-transcribed mRNA catabolic process, non-stop decay"/>
    <property type="evidence" value="ECO:0007669"/>
    <property type="project" value="InterPro"/>
</dbReference>
<dbReference type="GO" id="GO:0045727">
    <property type="term" value="P:positive regulation of translation"/>
    <property type="evidence" value="ECO:0000315"/>
    <property type="project" value="SGD"/>
</dbReference>
<dbReference type="GO" id="GO:0045948">
    <property type="term" value="P:positive regulation of translational initiation"/>
    <property type="evidence" value="ECO:0000314"/>
    <property type="project" value="ComplexPortal"/>
</dbReference>
<dbReference type="GO" id="GO:0072344">
    <property type="term" value="P:rescue of stalled ribosome"/>
    <property type="evidence" value="ECO:0000314"/>
    <property type="project" value="ComplexPortal"/>
</dbReference>
<dbReference type="GO" id="GO:0032790">
    <property type="term" value="P:ribosome disassembly"/>
    <property type="evidence" value="ECO:0000314"/>
    <property type="project" value="ComplexPortal"/>
</dbReference>
<dbReference type="GO" id="GO:0071025">
    <property type="term" value="P:RNA surveillance"/>
    <property type="evidence" value="ECO:0007669"/>
    <property type="project" value="InterPro"/>
</dbReference>
<dbReference type="FunFam" id="2.30.30.870:FF:000005">
    <property type="entry name" value="Protein DOM34 homolog"/>
    <property type="match status" value="1"/>
</dbReference>
<dbReference type="FunFam" id="3.30.420.60:FF:000004">
    <property type="entry name" value="Protein DOM34 homolog"/>
    <property type="match status" value="1"/>
</dbReference>
<dbReference type="FunFam" id="3.30.1330.30:FF:000008">
    <property type="entry name" value="Protein pelota homolog"/>
    <property type="match status" value="1"/>
</dbReference>
<dbReference type="Gene3D" id="3.30.1330.30">
    <property type="match status" value="1"/>
</dbReference>
<dbReference type="Gene3D" id="3.30.420.60">
    <property type="entry name" value="eRF1 domain 2"/>
    <property type="match status" value="1"/>
</dbReference>
<dbReference type="Gene3D" id="2.30.30.870">
    <property type="entry name" value="Pelota, domain A"/>
    <property type="match status" value="1"/>
</dbReference>
<dbReference type="InterPro" id="IPR042226">
    <property type="entry name" value="eFR1_2_sf"/>
</dbReference>
<dbReference type="InterPro" id="IPR005140">
    <property type="entry name" value="eRF1_1_Pelota"/>
</dbReference>
<dbReference type="InterPro" id="IPR005141">
    <property type="entry name" value="eRF1_2"/>
</dbReference>
<dbReference type="InterPro" id="IPR005142">
    <property type="entry name" value="eRF1_3"/>
</dbReference>
<dbReference type="InterPro" id="IPR038069">
    <property type="entry name" value="Pelota/DOM34_N"/>
</dbReference>
<dbReference type="InterPro" id="IPR029064">
    <property type="entry name" value="Ribosomal_eL30-like_sf"/>
</dbReference>
<dbReference type="InterPro" id="IPR004405">
    <property type="entry name" value="Transl-rel_pelota"/>
</dbReference>
<dbReference type="NCBIfam" id="TIGR00111">
    <property type="entry name" value="pelota"/>
    <property type="match status" value="1"/>
</dbReference>
<dbReference type="PANTHER" id="PTHR10853">
    <property type="entry name" value="PELOTA"/>
    <property type="match status" value="1"/>
</dbReference>
<dbReference type="PANTHER" id="PTHR10853:SF0">
    <property type="entry name" value="PROTEIN PELOTA HOMOLOG"/>
    <property type="match status" value="1"/>
</dbReference>
<dbReference type="Pfam" id="PF03463">
    <property type="entry name" value="eRF1_1"/>
    <property type="match status" value="1"/>
</dbReference>
<dbReference type="Pfam" id="PF03464">
    <property type="entry name" value="eRF1_2"/>
    <property type="match status" value="1"/>
</dbReference>
<dbReference type="Pfam" id="PF03465">
    <property type="entry name" value="eRF1_3"/>
    <property type="match status" value="1"/>
</dbReference>
<dbReference type="SMART" id="SM01194">
    <property type="entry name" value="eRF1_1"/>
    <property type="match status" value="1"/>
</dbReference>
<dbReference type="SUPFAM" id="SSF159065">
    <property type="entry name" value="Dom34/Pelota N-terminal domain-like"/>
    <property type="match status" value="1"/>
</dbReference>
<dbReference type="SUPFAM" id="SSF55315">
    <property type="entry name" value="L30e-like"/>
    <property type="match status" value="1"/>
</dbReference>
<dbReference type="SUPFAM" id="SSF53137">
    <property type="entry name" value="Translational machinery components"/>
    <property type="match status" value="1"/>
</dbReference>
<sequence>MKVISLKKDSFNKGGAVITLLPEDKEDLFTVYQIVDKDDELIFKKKFTSKLDEAGKKKSTDLVKLKIKVISEDFDMKDEYLKYKGVTVTDESGASNVDIPVGKYLSFTLDYVYPFTIIKQNFNKFMQKLLNEACNIEYKSDTAAVVLQEGIAHVCLVTSSSTILKQKIEYSMPKKKRTTDVLKFDEKTEKFYKAIYSAMKKDLNFDKLKTIILCSPGFYAKILMDKIFQYAEEEHNKKILDNKGMFFIAHCSTGYLQGINEVLKNPLYASKLQDTKYSKEIMVMDEFLLHLNKDDDKAWYGEKEVVKAAEYGAISYLLLTDKVLHSDNIAQREEYLKLMDSVESNGGKALVLSTLHSLGEELDQLTGIACILKYPLPDLDEDDGEE</sequence>
<name>DOM34_YEAST</name>
<accession>P33309</accession>
<accession>D6W1H6</accession>